<accession>Q2VZN1</accession>
<protein>
    <recommendedName>
        <fullName evidence="1">ATP synthase gamma chain</fullName>
    </recommendedName>
    <alternativeName>
        <fullName evidence="1">ATP synthase F1 sector gamma subunit</fullName>
    </alternativeName>
    <alternativeName>
        <fullName evidence="1">F-ATPase gamma subunit</fullName>
    </alternativeName>
</protein>
<sequence>MASLKDLRMKIVSVKSTRKITSAMKMVAASKLRRAQTAAEAARPFAERMERMLGTLAASLAGQSGAPRMISGTGFDKVHLLVAVTADRGLCGGFNSSIVRATKAMAADLLKQGKTIKIMPVGRKAREQLRRDYGQYMIEGFENLGRKGIVFAEADQVASQISAMFDAEEFDVCTVVYNKFKSAIAQEVTRQQVIPFPVPEQAAKSETGPKAIYEFEPSEEEILAEILPRNLATQMFRALLESQASEQGARMTAMDNATRNAGDMINALAIKYNRSRQAQITKELIEIISGAEAL</sequence>
<gene>
    <name evidence="1" type="primary">atpG</name>
    <name type="ordered locus">amb4140</name>
</gene>
<evidence type="ECO:0000255" key="1">
    <source>
        <dbReference type="HAMAP-Rule" id="MF_00815"/>
    </source>
</evidence>
<organism>
    <name type="scientific">Paramagnetospirillum magneticum (strain ATCC 700264 / AMB-1)</name>
    <name type="common">Magnetospirillum magneticum</name>
    <dbReference type="NCBI Taxonomy" id="342108"/>
    <lineage>
        <taxon>Bacteria</taxon>
        <taxon>Pseudomonadati</taxon>
        <taxon>Pseudomonadota</taxon>
        <taxon>Alphaproteobacteria</taxon>
        <taxon>Rhodospirillales</taxon>
        <taxon>Magnetospirillaceae</taxon>
        <taxon>Paramagnetospirillum</taxon>
    </lineage>
</organism>
<proteinExistence type="inferred from homology"/>
<name>ATPG_PARM1</name>
<reference key="1">
    <citation type="journal article" date="2005" name="DNA Res.">
        <title>Complete genome sequence of the facultative anaerobic magnetotactic bacterium Magnetospirillum sp. strain AMB-1.</title>
        <authorList>
            <person name="Matsunaga T."/>
            <person name="Okamura Y."/>
            <person name="Fukuda Y."/>
            <person name="Wahyudi A.T."/>
            <person name="Murase Y."/>
            <person name="Takeyama H."/>
        </authorList>
    </citation>
    <scope>NUCLEOTIDE SEQUENCE [LARGE SCALE GENOMIC DNA]</scope>
    <source>
        <strain>ATCC 700264 / AMB-1</strain>
    </source>
</reference>
<feature type="chain" id="PRO_1000053247" description="ATP synthase gamma chain">
    <location>
        <begin position="1"/>
        <end position="294"/>
    </location>
</feature>
<keyword id="KW-0066">ATP synthesis</keyword>
<keyword id="KW-0997">Cell inner membrane</keyword>
<keyword id="KW-1003">Cell membrane</keyword>
<keyword id="KW-0139">CF(1)</keyword>
<keyword id="KW-0375">Hydrogen ion transport</keyword>
<keyword id="KW-0406">Ion transport</keyword>
<keyword id="KW-0472">Membrane</keyword>
<keyword id="KW-0813">Transport</keyword>
<comment type="function">
    <text evidence="1">Produces ATP from ADP in the presence of a proton gradient across the membrane. The gamma chain is believed to be important in regulating ATPase activity and the flow of protons through the CF(0) complex.</text>
</comment>
<comment type="subunit">
    <text evidence="1">F-type ATPases have 2 components, CF(1) - the catalytic core - and CF(0) - the membrane proton channel. CF(1) has five subunits: alpha(3), beta(3), gamma(1), delta(1), epsilon(1). CF(0) has three main subunits: a, b and c.</text>
</comment>
<comment type="subcellular location">
    <subcellularLocation>
        <location evidence="1">Cell inner membrane</location>
        <topology evidence="1">Peripheral membrane protein</topology>
    </subcellularLocation>
</comment>
<comment type="similarity">
    <text evidence="1">Belongs to the ATPase gamma chain family.</text>
</comment>
<dbReference type="EMBL" id="AP007255">
    <property type="protein sequence ID" value="BAE52944.1"/>
    <property type="molecule type" value="Genomic_DNA"/>
</dbReference>
<dbReference type="RefSeq" id="WP_011386489.1">
    <property type="nucleotide sequence ID" value="NC_007626.1"/>
</dbReference>
<dbReference type="SMR" id="Q2VZN1"/>
<dbReference type="STRING" id="342108.amb4140"/>
<dbReference type="KEGG" id="mag:amb4140"/>
<dbReference type="HOGENOM" id="CLU_050669_0_1_5"/>
<dbReference type="OrthoDB" id="9812769at2"/>
<dbReference type="Proteomes" id="UP000007058">
    <property type="component" value="Chromosome"/>
</dbReference>
<dbReference type="GO" id="GO:0005886">
    <property type="term" value="C:plasma membrane"/>
    <property type="evidence" value="ECO:0007669"/>
    <property type="project" value="UniProtKB-SubCell"/>
</dbReference>
<dbReference type="GO" id="GO:0045259">
    <property type="term" value="C:proton-transporting ATP synthase complex"/>
    <property type="evidence" value="ECO:0007669"/>
    <property type="project" value="UniProtKB-KW"/>
</dbReference>
<dbReference type="GO" id="GO:0005524">
    <property type="term" value="F:ATP binding"/>
    <property type="evidence" value="ECO:0007669"/>
    <property type="project" value="UniProtKB-UniRule"/>
</dbReference>
<dbReference type="GO" id="GO:0046933">
    <property type="term" value="F:proton-transporting ATP synthase activity, rotational mechanism"/>
    <property type="evidence" value="ECO:0007669"/>
    <property type="project" value="UniProtKB-UniRule"/>
</dbReference>
<dbReference type="GO" id="GO:0042777">
    <property type="term" value="P:proton motive force-driven plasma membrane ATP synthesis"/>
    <property type="evidence" value="ECO:0007669"/>
    <property type="project" value="UniProtKB-UniRule"/>
</dbReference>
<dbReference type="CDD" id="cd12151">
    <property type="entry name" value="F1-ATPase_gamma"/>
    <property type="match status" value="1"/>
</dbReference>
<dbReference type="FunFam" id="1.10.287.80:FF:000001">
    <property type="entry name" value="ATP synthase gamma chain"/>
    <property type="match status" value="1"/>
</dbReference>
<dbReference type="Gene3D" id="3.40.1380.10">
    <property type="match status" value="1"/>
</dbReference>
<dbReference type="Gene3D" id="1.10.287.80">
    <property type="entry name" value="ATP synthase, gamma subunit, helix hairpin domain"/>
    <property type="match status" value="1"/>
</dbReference>
<dbReference type="HAMAP" id="MF_00815">
    <property type="entry name" value="ATP_synth_gamma_bact"/>
    <property type="match status" value="1"/>
</dbReference>
<dbReference type="InterPro" id="IPR035968">
    <property type="entry name" value="ATP_synth_F1_ATPase_gsu"/>
</dbReference>
<dbReference type="InterPro" id="IPR000131">
    <property type="entry name" value="ATP_synth_F1_gsu"/>
</dbReference>
<dbReference type="InterPro" id="IPR023632">
    <property type="entry name" value="ATP_synth_F1_gsu_CS"/>
</dbReference>
<dbReference type="NCBIfam" id="TIGR01146">
    <property type="entry name" value="ATPsyn_F1gamma"/>
    <property type="match status" value="1"/>
</dbReference>
<dbReference type="NCBIfam" id="NF004146">
    <property type="entry name" value="PRK05621.1-4"/>
    <property type="match status" value="1"/>
</dbReference>
<dbReference type="PANTHER" id="PTHR11693">
    <property type="entry name" value="ATP SYNTHASE GAMMA CHAIN"/>
    <property type="match status" value="1"/>
</dbReference>
<dbReference type="PANTHER" id="PTHR11693:SF22">
    <property type="entry name" value="ATP SYNTHASE SUBUNIT GAMMA, MITOCHONDRIAL"/>
    <property type="match status" value="1"/>
</dbReference>
<dbReference type="Pfam" id="PF00231">
    <property type="entry name" value="ATP-synt"/>
    <property type="match status" value="1"/>
</dbReference>
<dbReference type="PIRSF" id="PIRSF039089">
    <property type="entry name" value="ATP_synthase_gamma"/>
    <property type="match status" value="1"/>
</dbReference>
<dbReference type="PRINTS" id="PR00126">
    <property type="entry name" value="ATPASEGAMMA"/>
</dbReference>
<dbReference type="SUPFAM" id="SSF52943">
    <property type="entry name" value="ATP synthase (F1-ATPase), gamma subunit"/>
    <property type="match status" value="1"/>
</dbReference>
<dbReference type="PROSITE" id="PS00153">
    <property type="entry name" value="ATPASE_GAMMA"/>
    <property type="match status" value="1"/>
</dbReference>